<dbReference type="EC" id="6.1.1.20" evidence="1"/>
<dbReference type="EMBL" id="CP001215">
    <property type="protein sequence ID" value="ACP16244.1"/>
    <property type="molecule type" value="Genomic_DNA"/>
</dbReference>
<dbReference type="RefSeq" id="WP_000388219.1">
    <property type="nucleotide sequence ID" value="NC_012581.1"/>
</dbReference>
<dbReference type="SMR" id="C3L8T8"/>
<dbReference type="GeneID" id="83638271"/>
<dbReference type="KEGG" id="bah:BAMEG_4834"/>
<dbReference type="HOGENOM" id="CLU_025086_0_1_9"/>
<dbReference type="GO" id="GO:0005737">
    <property type="term" value="C:cytoplasm"/>
    <property type="evidence" value="ECO:0007669"/>
    <property type="project" value="UniProtKB-SubCell"/>
</dbReference>
<dbReference type="GO" id="GO:0005524">
    <property type="term" value="F:ATP binding"/>
    <property type="evidence" value="ECO:0007669"/>
    <property type="project" value="UniProtKB-UniRule"/>
</dbReference>
<dbReference type="GO" id="GO:0140096">
    <property type="term" value="F:catalytic activity, acting on a protein"/>
    <property type="evidence" value="ECO:0007669"/>
    <property type="project" value="UniProtKB-ARBA"/>
</dbReference>
<dbReference type="GO" id="GO:0000287">
    <property type="term" value="F:magnesium ion binding"/>
    <property type="evidence" value="ECO:0007669"/>
    <property type="project" value="UniProtKB-UniRule"/>
</dbReference>
<dbReference type="GO" id="GO:0004826">
    <property type="term" value="F:phenylalanine-tRNA ligase activity"/>
    <property type="evidence" value="ECO:0007669"/>
    <property type="project" value="UniProtKB-UniRule"/>
</dbReference>
<dbReference type="GO" id="GO:0016740">
    <property type="term" value="F:transferase activity"/>
    <property type="evidence" value="ECO:0007669"/>
    <property type="project" value="UniProtKB-ARBA"/>
</dbReference>
<dbReference type="GO" id="GO:0000049">
    <property type="term" value="F:tRNA binding"/>
    <property type="evidence" value="ECO:0007669"/>
    <property type="project" value="InterPro"/>
</dbReference>
<dbReference type="GO" id="GO:0006432">
    <property type="term" value="P:phenylalanyl-tRNA aminoacylation"/>
    <property type="evidence" value="ECO:0007669"/>
    <property type="project" value="UniProtKB-UniRule"/>
</dbReference>
<dbReference type="CDD" id="cd00496">
    <property type="entry name" value="PheRS_alpha_core"/>
    <property type="match status" value="1"/>
</dbReference>
<dbReference type="FunFam" id="3.30.930.10:FF:000003">
    <property type="entry name" value="Phenylalanine--tRNA ligase alpha subunit"/>
    <property type="match status" value="1"/>
</dbReference>
<dbReference type="Gene3D" id="3.30.930.10">
    <property type="entry name" value="Bira Bifunctional Protein, Domain 2"/>
    <property type="match status" value="1"/>
</dbReference>
<dbReference type="HAMAP" id="MF_00281">
    <property type="entry name" value="Phe_tRNA_synth_alpha1"/>
    <property type="match status" value="1"/>
</dbReference>
<dbReference type="InterPro" id="IPR006195">
    <property type="entry name" value="aa-tRNA-synth_II"/>
</dbReference>
<dbReference type="InterPro" id="IPR045864">
    <property type="entry name" value="aa-tRNA-synth_II/BPL/LPL"/>
</dbReference>
<dbReference type="InterPro" id="IPR004529">
    <property type="entry name" value="Phe-tRNA-synth_IIc_asu"/>
</dbReference>
<dbReference type="InterPro" id="IPR004188">
    <property type="entry name" value="Phe-tRNA_ligase_II_N"/>
</dbReference>
<dbReference type="InterPro" id="IPR022911">
    <property type="entry name" value="Phe_tRNA_ligase_alpha1_bac"/>
</dbReference>
<dbReference type="InterPro" id="IPR002319">
    <property type="entry name" value="Phenylalanyl-tRNA_Synthase"/>
</dbReference>
<dbReference type="InterPro" id="IPR010978">
    <property type="entry name" value="tRNA-bd_arm"/>
</dbReference>
<dbReference type="NCBIfam" id="TIGR00468">
    <property type="entry name" value="pheS"/>
    <property type="match status" value="1"/>
</dbReference>
<dbReference type="PANTHER" id="PTHR11538:SF41">
    <property type="entry name" value="PHENYLALANINE--TRNA LIGASE, MITOCHONDRIAL"/>
    <property type="match status" value="1"/>
</dbReference>
<dbReference type="PANTHER" id="PTHR11538">
    <property type="entry name" value="PHENYLALANYL-TRNA SYNTHETASE"/>
    <property type="match status" value="1"/>
</dbReference>
<dbReference type="Pfam" id="PF02912">
    <property type="entry name" value="Phe_tRNA-synt_N"/>
    <property type="match status" value="1"/>
</dbReference>
<dbReference type="Pfam" id="PF01409">
    <property type="entry name" value="tRNA-synt_2d"/>
    <property type="match status" value="1"/>
</dbReference>
<dbReference type="SUPFAM" id="SSF55681">
    <property type="entry name" value="Class II aaRS and biotin synthetases"/>
    <property type="match status" value="1"/>
</dbReference>
<dbReference type="SUPFAM" id="SSF46589">
    <property type="entry name" value="tRNA-binding arm"/>
    <property type="match status" value="1"/>
</dbReference>
<dbReference type="PROSITE" id="PS50862">
    <property type="entry name" value="AA_TRNA_LIGASE_II"/>
    <property type="match status" value="1"/>
</dbReference>
<proteinExistence type="inferred from homology"/>
<feature type="chain" id="PRO_1000199296" description="Phenylalanine--tRNA ligase alpha subunit">
    <location>
        <begin position="1"/>
        <end position="344"/>
    </location>
</feature>
<feature type="binding site" evidence="1">
    <location>
        <position position="256"/>
    </location>
    <ligand>
        <name>Mg(2+)</name>
        <dbReference type="ChEBI" id="CHEBI:18420"/>
        <note>shared with beta subunit</note>
    </ligand>
</feature>
<sequence>MEARLKELKQKALELIEEAKELKGLNDVRVAYLGKKGPITEVLRGMGKLSAEERPRMGALVNEVREAIQTRLDDKISNLEKAVIEAKLATETIDVTLPGRPVETGCHHPLTAVVEQIEDVFIGMGYEVAEGTEVEKDYYNFEALNLPKDHPARDMQDTFYITEETLLRTHTSSVQARTMENNKEKGPIKIICPGKVYRRDDDDATHSHQFMQIEGLVIDKNIRMSDLKGTLQVFVKKMFGEDREIRLRPSFFPFTEPSVEMDISCMMCHGKGCGTCKGTGWIEILGAGMVHPNVLEMAGYDSKEYQGFAFGMGAERIAMLKYGVDDIRHFYTNDVRFLQQFKRA</sequence>
<keyword id="KW-0030">Aminoacyl-tRNA synthetase</keyword>
<keyword id="KW-0067">ATP-binding</keyword>
<keyword id="KW-0963">Cytoplasm</keyword>
<keyword id="KW-0436">Ligase</keyword>
<keyword id="KW-0460">Magnesium</keyword>
<keyword id="KW-0479">Metal-binding</keyword>
<keyword id="KW-0547">Nucleotide-binding</keyword>
<keyword id="KW-0648">Protein biosynthesis</keyword>
<evidence type="ECO:0000255" key="1">
    <source>
        <dbReference type="HAMAP-Rule" id="MF_00281"/>
    </source>
</evidence>
<reference key="1">
    <citation type="submission" date="2008-10" db="EMBL/GenBank/DDBJ databases">
        <title>Genome sequence of Bacillus anthracis str. CDC 684.</title>
        <authorList>
            <person name="Dodson R.J."/>
            <person name="Munk A.C."/>
            <person name="Brettin T."/>
            <person name="Bruce D."/>
            <person name="Detter C."/>
            <person name="Tapia R."/>
            <person name="Han C."/>
            <person name="Sutton G."/>
            <person name="Sims D."/>
        </authorList>
    </citation>
    <scope>NUCLEOTIDE SEQUENCE [LARGE SCALE GENOMIC DNA]</scope>
    <source>
        <strain>CDC 684 / NRRL 3495</strain>
    </source>
</reference>
<organism>
    <name type="scientific">Bacillus anthracis (strain CDC 684 / NRRL 3495)</name>
    <dbReference type="NCBI Taxonomy" id="568206"/>
    <lineage>
        <taxon>Bacteria</taxon>
        <taxon>Bacillati</taxon>
        <taxon>Bacillota</taxon>
        <taxon>Bacilli</taxon>
        <taxon>Bacillales</taxon>
        <taxon>Bacillaceae</taxon>
        <taxon>Bacillus</taxon>
        <taxon>Bacillus cereus group</taxon>
    </lineage>
</organism>
<name>SYFA_BACAC</name>
<accession>C3L8T8</accession>
<protein>
    <recommendedName>
        <fullName evidence="1">Phenylalanine--tRNA ligase alpha subunit</fullName>
        <ecNumber evidence="1">6.1.1.20</ecNumber>
    </recommendedName>
    <alternativeName>
        <fullName evidence="1">Phenylalanyl-tRNA synthetase alpha subunit</fullName>
        <shortName evidence="1">PheRS</shortName>
    </alternativeName>
</protein>
<comment type="catalytic activity">
    <reaction evidence="1">
        <text>tRNA(Phe) + L-phenylalanine + ATP = L-phenylalanyl-tRNA(Phe) + AMP + diphosphate + H(+)</text>
        <dbReference type="Rhea" id="RHEA:19413"/>
        <dbReference type="Rhea" id="RHEA-COMP:9668"/>
        <dbReference type="Rhea" id="RHEA-COMP:9699"/>
        <dbReference type="ChEBI" id="CHEBI:15378"/>
        <dbReference type="ChEBI" id="CHEBI:30616"/>
        <dbReference type="ChEBI" id="CHEBI:33019"/>
        <dbReference type="ChEBI" id="CHEBI:58095"/>
        <dbReference type="ChEBI" id="CHEBI:78442"/>
        <dbReference type="ChEBI" id="CHEBI:78531"/>
        <dbReference type="ChEBI" id="CHEBI:456215"/>
        <dbReference type="EC" id="6.1.1.20"/>
    </reaction>
</comment>
<comment type="cofactor">
    <cofactor evidence="1">
        <name>Mg(2+)</name>
        <dbReference type="ChEBI" id="CHEBI:18420"/>
    </cofactor>
    <text evidence="1">Binds 2 magnesium ions per tetramer.</text>
</comment>
<comment type="subunit">
    <text evidence="1">Tetramer of two alpha and two beta subunits.</text>
</comment>
<comment type="subcellular location">
    <subcellularLocation>
        <location evidence="1">Cytoplasm</location>
    </subcellularLocation>
</comment>
<comment type="similarity">
    <text evidence="1">Belongs to the class-II aminoacyl-tRNA synthetase family. Phe-tRNA synthetase alpha subunit type 1 subfamily.</text>
</comment>
<gene>
    <name evidence="1" type="primary">pheS</name>
    <name type="ordered locus">BAMEG_4834</name>
</gene>